<dbReference type="EC" id="4.1.1.23" evidence="1"/>
<dbReference type="EMBL" id="CU928161">
    <property type="protein sequence ID" value="CAR02743.1"/>
    <property type="molecule type" value="Genomic_DNA"/>
</dbReference>
<dbReference type="RefSeq" id="WP_001351260.1">
    <property type="nucleotide sequence ID" value="NC_011742.1"/>
</dbReference>
<dbReference type="SMR" id="B7MLV7"/>
<dbReference type="KEGG" id="ecz:ECS88_1422"/>
<dbReference type="HOGENOM" id="CLU_067069_0_0_6"/>
<dbReference type="UniPathway" id="UPA00070">
    <property type="reaction ID" value="UER00120"/>
</dbReference>
<dbReference type="Proteomes" id="UP000000747">
    <property type="component" value="Chromosome"/>
</dbReference>
<dbReference type="GO" id="GO:0005829">
    <property type="term" value="C:cytosol"/>
    <property type="evidence" value="ECO:0007669"/>
    <property type="project" value="TreeGrafter"/>
</dbReference>
<dbReference type="GO" id="GO:0004590">
    <property type="term" value="F:orotidine-5'-phosphate decarboxylase activity"/>
    <property type="evidence" value="ECO:0007669"/>
    <property type="project" value="UniProtKB-UniRule"/>
</dbReference>
<dbReference type="GO" id="GO:0006207">
    <property type="term" value="P:'de novo' pyrimidine nucleobase biosynthetic process"/>
    <property type="evidence" value="ECO:0007669"/>
    <property type="project" value="InterPro"/>
</dbReference>
<dbReference type="GO" id="GO:0044205">
    <property type="term" value="P:'de novo' UMP biosynthetic process"/>
    <property type="evidence" value="ECO:0007669"/>
    <property type="project" value="UniProtKB-UniRule"/>
</dbReference>
<dbReference type="CDD" id="cd04725">
    <property type="entry name" value="OMP_decarboxylase_like"/>
    <property type="match status" value="1"/>
</dbReference>
<dbReference type="FunFam" id="3.20.20.70:FF:000015">
    <property type="entry name" value="Orotidine 5'-phosphate decarboxylase"/>
    <property type="match status" value="1"/>
</dbReference>
<dbReference type="Gene3D" id="3.20.20.70">
    <property type="entry name" value="Aldolase class I"/>
    <property type="match status" value="1"/>
</dbReference>
<dbReference type="HAMAP" id="MF_01200_B">
    <property type="entry name" value="OMPdecase_type1_B"/>
    <property type="match status" value="1"/>
</dbReference>
<dbReference type="InterPro" id="IPR013785">
    <property type="entry name" value="Aldolase_TIM"/>
</dbReference>
<dbReference type="InterPro" id="IPR014732">
    <property type="entry name" value="OMPdecase"/>
</dbReference>
<dbReference type="InterPro" id="IPR018089">
    <property type="entry name" value="OMPdecase_AS"/>
</dbReference>
<dbReference type="InterPro" id="IPR047596">
    <property type="entry name" value="OMPdecase_bac"/>
</dbReference>
<dbReference type="InterPro" id="IPR001754">
    <property type="entry name" value="OMPdeCOase_dom"/>
</dbReference>
<dbReference type="InterPro" id="IPR011060">
    <property type="entry name" value="RibuloseP-bd_barrel"/>
</dbReference>
<dbReference type="NCBIfam" id="NF001273">
    <property type="entry name" value="PRK00230.1"/>
    <property type="match status" value="1"/>
</dbReference>
<dbReference type="NCBIfam" id="TIGR01740">
    <property type="entry name" value="pyrF"/>
    <property type="match status" value="1"/>
</dbReference>
<dbReference type="PANTHER" id="PTHR32119">
    <property type="entry name" value="OROTIDINE 5'-PHOSPHATE DECARBOXYLASE"/>
    <property type="match status" value="1"/>
</dbReference>
<dbReference type="PANTHER" id="PTHR32119:SF2">
    <property type="entry name" value="OROTIDINE 5'-PHOSPHATE DECARBOXYLASE"/>
    <property type="match status" value="1"/>
</dbReference>
<dbReference type="Pfam" id="PF00215">
    <property type="entry name" value="OMPdecase"/>
    <property type="match status" value="1"/>
</dbReference>
<dbReference type="SMART" id="SM00934">
    <property type="entry name" value="OMPdecase"/>
    <property type="match status" value="1"/>
</dbReference>
<dbReference type="SUPFAM" id="SSF51366">
    <property type="entry name" value="Ribulose-phoshate binding barrel"/>
    <property type="match status" value="1"/>
</dbReference>
<dbReference type="PROSITE" id="PS00156">
    <property type="entry name" value="OMPDECASE"/>
    <property type="match status" value="1"/>
</dbReference>
<name>PYRF_ECO45</name>
<feature type="chain" id="PRO_1000138522" description="Orotidine 5'-phosphate decarboxylase">
    <location>
        <begin position="1"/>
        <end position="245"/>
    </location>
</feature>
<feature type="active site" description="Proton donor" evidence="1">
    <location>
        <position position="73"/>
    </location>
</feature>
<feature type="binding site" evidence="1">
    <location>
        <position position="22"/>
    </location>
    <ligand>
        <name>substrate</name>
    </ligand>
</feature>
<feature type="binding site" evidence="1">
    <location>
        <position position="44"/>
    </location>
    <ligand>
        <name>substrate</name>
    </ligand>
</feature>
<feature type="binding site" evidence="1">
    <location>
        <begin position="71"/>
        <end position="80"/>
    </location>
    <ligand>
        <name>substrate</name>
    </ligand>
</feature>
<feature type="binding site" evidence="1">
    <location>
        <position position="131"/>
    </location>
    <ligand>
        <name>substrate</name>
    </ligand>
</feature>
<feature type="binding site" evidence="1">
    <location>
        <position position="192"/>
    </location>
    <ligand>
        <name>substrate</name>
    </ligand>
</feature>
<feature type="binding site" evidence="1">
    <location>
        <position position="201"/>
    </location>
    <ligand>
        <name>substrate</name>
    </ligand>
</feature>
<feature type="binding site" evidence="1">
    <location>
        <position position="221"/>
    </location>
    <ligand>
        <name>substrate</name>
    </ligand>
</feature>
<feature type="binding site" evidence="1">
    <location>
        <position position="222"/>
    </location>
    <ligand>
        <name>substrate</name>
    </ligand>
</feature>
<reference key="1">
    <citation type="journal article" date="2009" name="PLoS Genet.">
        <title>Organised genome dynamics in the Escherichia coli species results in highly diverse adaptive paths.</title>
        <authorList>
            <person name="Touchon M."/>
            <person name="Hoede C."/>
            <person name="Tenaillon O."/>
            <person name="Barbe V."/>
            <person name="Baeriswyl S."/>
            <person name="Bidet P."/>
            <person name="Bingen E."/>
            <person name="Bonacorsi S."/>
            <person name="Bouchier C."/>
            <person name="Bouvet O."/>
            <person name="Calteau A."/>
            <person name="Chiapello H."/>
            <person name="Clermont O."/>
            <person name="Cruveiller S."/>
            <person name="Danchin A."/>
            <person name="Diard M."/>
            <person name="Dossat C."/>
            <person name="Karoui M.E."/>
            <person name="Frapy E."/>
            <person name="Garry L."/>
            <person name="Ghigo J.M."/>
            <person name="Gilles A.M."/>
            <person name="Johnson J."/>
            <person name="Le Bouguenec C."/>
            <person name="Lescat M."/>
            <person name="Mangenot S."/>
            <person name="Martinez-Jehanne V."/>
            <person name="Matic I."/>
            <person name="Nassif X."/>
            <person name="Oztas S."/>
            <person name="Petit M.A."/>
            <person name="Pichon C."/>
            <person name="Rouy Z."/>
            <person name="Ruf C.S."/>
            <person name="Schneider D."/>
            <person name="Tourret J."/>
            <person name="Vacherie B."/>
            <person name="Vallenet D."/>
            <person name="Medigue C."/>
            <person name="Rocha E.P.C."/>
            <person name="Denamur E."/>
        </authorList>
    </citation>
    <scope>NUCLEOTIDE SEQUENCE [LARGE SCALE GENOMIC DNA]</scope>
    <source>
        <strain>S88 / ExPEC</strain>
    </source>
</reference>
<proteinExistence type="inferred from homology"/>
<accession>B7MLV7</accession>
<evidence type="ECO:0000255" key="1">
    <source>
        <dbReference type="HAMAP-Rule" id="MF_01200"/>
    </source>
</evidence>
<sequence>MTLTASSSSRAVTNSPVVVALDYHNRDAAMAFVDKIDPRDCRLKVGKEMFTLFGPQFVRELQQRGFDIFLDLKFHDIPNTAAHAVAAAADLGVWMVNVHASGGARMMTAAREALVPFGKDAPLLIAVTVLTSMEASDLADLGVTLSPADYAERLAALTQKCGLDGVVCSAQEAVRFKQVFGQEFKLVTPGIRPQGSDAGDQRRIMTPEQALAAGVDYMVIGRPVTQSVDPAQTLKAINASLQRSA</sequence>
<keyword id="KW-0210">Decarboxylase</keyword>
<keyword id="KW-0456">Lyase</keyword>
<keyword id="KW-0665">Pyrimidine biosynthesis</keyword>
<keyword id="KW-1185">Reference proteome</keyword>
<organism>
    <name type="scientific">Escherichia coli O45:K1 (strain S88 / ExPEC)</name>
    <dbReference type="NCBI Taxonomy" id="585035"/>
    <lineage>
        <taxon>Bacteria</taxon>
        <taxon>Pseudomonadati</taxon>
        <taxon>Pseudomonadota</taxon>
        <taxon>Gammaproteobacteria</taxon>
        <taxon>Enterobacterales</taxon>
        <taxon>Enterobacteriaceae</taxon>
        <taxon>Escherichia</taxon>
    </lineage>
</organism>
<comment type="function">
    <text evidence="1">Catalyzes the decarboxylation of orotidine 5'-monophosphate (OMP) to uridine 5'-monophosphate (UMP).</text>
</comment>
<comment type="catalytic activity">
    <reaction evidence="1">
        <text>orotidine 5'-phosphate + H(+) = UMP + CO2</text>
        <dbReference type="Rhea" id="RHEA:11596"/>
        <dbReference type="ChEBI" id="CHEBI:15378"/>
        <dbReference type="ChEBI" id="CHEBI:16526"/>
        <dbReference type="ChEBI" id="CHEBI:57538"/>
        <dbReference type="ChEBI" id="CHEBI:57865"/>
        <dbReference type="EC" id="4.1.1.23"/>
    </reaction>
</comment>
<comment type="pathway">
    <text evidence="1">Pyrimidine metabolism; UMP biosynthesis via de novo pathway; UMP from orotate: step 2/2.</text>
</comment>
<comment type="subunit">
    <text evidence="1">Homodimer.</text>
</comment>
<comment type="similarity">
    <text evidence="1">Belongs to the OMP decarboxylase family. Type 1 subfamily.</text>
</comment>
<gene>
    <name evidence="1" type="primary">pyrF</name>
    <name type="ordered locus">ECS88_1422</name>
</gene>
<protein>
    <recommendedName>
        <fullName evidence="1">Orotidine 5'-phosphate decarboxylase</fullName>
        <ecNumber evidence="1">4.1.1.23</ecNumber>
    </recommendedName>
    <alternativeName>
        <fullName evidence="1">OMP decarboxylase</fullName>
        <shortName evidence="1">OMPDCase</shortName>
        <shortName evidence="1">OMPdecase</shortName>
    </alternativeName>
</protein>